<dbReference type="EC" id="3.1.27.-"/>
<dbReference type="EMBL" id="X58278">
    <property type="protein sequence ID" value="CAA41217.1"/>
    <property type="molecule type" value="Genomic_DNA"/>
</dbReference>
<dbReference type="EMBL" id="M83781">
    <property type="protein sequence ID" value="AAB07779.1"/>
    <property type="molecule type" value="Genomic_DNA"/>
</dbReference>
<dbReference type="EMBL" id="AAHF01000011">
    <property type="protein sequence ID" value="EAL86071.1"/>
    <property type="molecule type" value="Genomic_DNA"/>
</dbReference>
<dbReference type="EMBL" id="S39330">
    <property type="protein sequence ID" value="AAB22442.1"/>
    <property type="molecule type" value="mRNA"/>
</dbReference>
<dbReference type="PIR" id="A46497">
    <property type="entry name" value="A46497"/>
</dbReference>
<dbReference type="RefSeq" id="XP_748109.1">
    <property type="nucleotide sequence ID" value="XM_743016.1"/>
</dbReference>
<dbReference type="SMR" id="P67875"/>
<dbReference type="STRING" id="330879.P67875"/>
<dbReference type="Allergome" id="3107">
    <property type="allergen name" value="Asp f 1.0101"/>
</dbReference>
<dbReference type="Allergome" id="62">
    <property type="allergen name" value="Asp f 1"/>
</dbReference>
<dbReference type="ABCD" id="P67875">
    <property type="antibodies" value="2 sequenced antibodies"/>
</dbReference>
<dbReference type="EnsemblFungi" id="EAL86071">
    <property type="protein sequence ID" value="EAL86071"/>
    <property type="gene ID" value="AFUA_5G02330"/>
</dbReference>
<dbReference type="GeneID" id="3505541"/>
<dbReference type="KEGG" id="afm:AFUA_5G02330"/>
<dbReference type="VEuPathDB" id="FungiDB:Afu5g02330"/>
<dbReference type="eggNOG" id="ENOG502SV0S">
    <property type="taxonomic scope" value="Eukaryota"/>
</dbReference>
<dbReference type="HOGENOM" id="CLU_1768332_0_0_1"/>
<dbReference type="InParanoid" id="P67875"/>
<dbReference type="OMA" id="SSYPHWF"/>
<dbReference type="OrthoDB" id="4998592at2759"/>
<dbReference type="Proteomes" id="UP000002530">
    <property type="component" value="Chromosome 5"/>
</dbReference>
<dbReference type="GO" id="GO:0005576">
    <property type="term" value="C:extracellular region"/>
    <property type="evidence" value="ECO:0007669"/>
    <property type="project" value="UniProtKB-SubCell"/>
</dbReference>
<dbReference type="GO" id="GO:0019863">
    <property type="term" value="F:IgE binding"/>
    <property type="evidence" value="ECO:0000314"/>
    <property type="project" value="AspGD"/>
</dbReference>
<dbReference type="GO" id="GO:0003723">
    <property type="term" value="F:RNA binding"/>
    <property type="evidence" value="ECO:0007669"/>
    <property type="project" value="InterPro"/>
</dbReference>
<dbReference type="GO" id="GO:0004521">
    <property type="term" value="F:RNA endonuclease activity"/>
    <property type="evidence" value="ECO:0007669"/>
    <property type="project" value="InterPro"/>
</dbReference>
<dbReference type="GO" id="GO:0004540">
    <property type="term" value="F:RNA nuclease activity"/>
    <property type="evidence" value="ECO:0000314"/>
    <property type="project" value="AspGD"/>
</dbReference>
<dbReference type="GO" id="GO:0017148">
    <property type="term" value="P:negative regulation of translation"/>
    <property type="evidence" value="ECO:0007669"/>
    <property type="project" value="UniProtKB-KW"/>
</dbReference>
<dbReference type="GO" id="GO:0052167">
    <property type="term" value="P:symbiont-mediated perturbation of host innate immune response"/>
    <property type="evidence" value="ECO:0000315"/>
    <property type="project" value="UniProtKB"/>
</dbReference>
<dbReference type="CDD" id="cd00606">
    <property type="entry name" value="fungal_RNase"/>
    <property type="match status" value="1"/>
</dbReference>
<dbReference type="FunFam" id="3.10.450.30:FF:000001">
    <property type="entry name" value="Ribonuclease mitogillin"/>
    <property type="match status" value="1"/>
</dbReference>
<dbReference type="Gene3D" id="3.10.450.30">
    <property type="entry name" value="Microbial ribonucleases"/>
    <property type="match status" value="1"/>
</dbReference>
<dbReference type="InterPro" id="IPR004025">
    <property type="entry name" value="Fun_ribotoxin"/>
</dbReference>
<dbReference type="InterPro" id="IPR000026">
    <property type="entry name" value="N1-like"/>
</dbReference>
<dbReference type="InterPro" id="IPR016191">
    <property type="entry name" value="Ribonuclease/ribotoxin"/>
</dbReference>
<dbReference type="InterPro" id="IPR048269">
    <property type="entry name" value="RNase_U2"/>
</dbReference>
<dbReference type="Pfam" id="PF00545">
    <property type="entry name" value="Ribonuclease"/>
    <property type="match status" value="1"/>
</dbReference>
<dbReference type="PIRSF" id="PIRSF037430">
    <property type="entry name" value="RNase_U2"/>
    <property type="match status" value="1"/>
</dbReference>
<dbReference type="PRINTS" id="PR01704">
    <property type="entry name" value="FUNRIBOTOXIN"/>
</dbReference>
<dbReference type="SUPFAM" id="SSF53933">
    <property type="entry name" value="Microbial ribonucleases"/>
    <property type="match status" value="1"/>
</dbReference>
<name>RNMG_ASPFU</name>
<accession>P67875</accession>
<accession>P04389</accession>
<accession>P19792</accession>
<accession>Q4WEA6</accession>
<feature type="signal peptide" evidence="2">
    <location>
        <begin position="1"/>
        <end position="27"/>
    </location>
</feature>
<feature type="chain" id="PRO_0000030837" description="Ribonuclease mitogillin">
    <location>
        <begin position="28"/>
        <end position="176"/>
    </location>
</feature>
<feature type="active site" evidence="1">
    <location>
        <position position="76"/>
    </location>
</feature>
<feature type="active site" description="Proton acceptor" evidence="1">
    <location>
        <position position="122"/>
    </location>
</feature>
<feature type="active site" description="Proton donor" evidence="1">
    <location>
        <position position="163"/>
    </location>
</feature>
<feature type="disulfide bond">
    <location>
        <begin position="32"/>
        <end position="174"/>
    </location>
</feature>
<feature type="disulfide bond">
    <location>
        <begin position="102"/>
        <end position="158"/>
    </location>
</feature>
<feature type="sequence conflict" description="In Ref. 2; CAA41217/AAB07779." evidence="3" ref="2">
    <original>S</original>
    <variation>N</variation>
    <location>
        <position position="52"/>
    </location>
</feature>
<sequence length="176" mass="19595">MVAIKNLFLLAATAVSVLAAPSPLDARATWTCINQQLNPKTNKWEDKRLLYSQAKAESNSHHAPLSDGKTGSSYPHWFTNGYDGNGKLIKGRTPIKFGKADCDRPPKHSQNGMGKDDHYLLEFPTFPDGHDYKFDSKKPKEDPGPARVIYTYPNKVFCGIVAHQRGNQGDLRLCSH</sequence>
<evidence type="ECO:0000250" key="1"/>
<evidence type="ECO:0000269" key="2">
    <source ref="6"/>
</evidence>
<evidence type="ECO:0000305" key="3"/>
<gene>
    <name type="primary">mitF</name>
    <name type="synonym">aspF1</name>
    <name type="ORF">AFUA_5G02330</name>
</gene>
<organism>
    <name type="scientific">Aspergillus fumigatus (strain ATCC MYA-4609 / CBS 101355 / FGSC A1100 / Af293)</name>
    <name type="common">Neosartorya fumigata</name>
    <dbReference type="NCBI Taxonomy" id="330879"/>
    <lineage>
        <taxon>Eukaryota</taxon>
        <taxon>Fungi</taxon>
        <taxon>Dikarya</taxon>
        <taxon>Ascomycota</taxon>
        <taxon>Pezizomycotina</taxon>
        <taxon>Eurotiomycetes</taxon>
        <taxon>Eurotiomycetidae</taxon>
        <taxon>Eurotiales</taxon>
        <taxon>Aspergillaceae</taxon>
        <taxon>Aspergillus</taxon>
        <taxon>Aspergillus subgen. Fumigati</taxon>
    </lineage>
</organism>
<proteinExistence type="evidence at protein level"/>
<comment type="function">
    <text>This purine-specific ribonuclease cleaves 28S RNA in eukaryotic ribosomes, inhibits protein synthesis, and shows antitumor activity.</text>
</comment>
<comment type="subcellular location">
    <subcellularLocation>
        <location>Secreted</location>
    </subcellularLocation>
</comment>
<comment type="allergen">
    <text>Causes an allergic reaction in human. Binds to IgE. May promote colonization through cytotoxic activity and by causing inflammatory reactions involving IgE antibodies. Also binds to IgG.</text>
</comment>
<comment type="similarity">
    <text evidence="3">Belongs to the ribonuclease U2 family.</text>
</comment>
<keyword id="KW-0020">Allergen</keyword>
<keyword id="KW-0903">Direct protein sequencing</keyword>
<keyword id="KW-1015">Disulfide bond</keyword>
<keyword id="KW-0378">Hydrolase</keyword>
<keyword id="KW-0540">Nuclease</keyword>
<keyword id="KW-0652">Protein synthesis inhibitor</keyword>
<keyword id="KW-1185">Reference proteome</keyword>
<keyword id="KW-0964">Secreted</keyword>
<keyword id="KW-0732">Signal</keyword>
<protein>
    <recommendedName>
        <fullName>Ribonuclease mitogillin</fullName>
        <ecNumber>3.1.27.-</ecNumber>
    </recommendedName>
    <alternativeName>
        <fullName>Allergen Asp f I</fullName>
    </alternativeName>
    <alternativeName>
        <fullName>Allergen I/a</fullName>
    </alternativeName>
    <alternativeName>
        <fullName>IgE-binding ribotoxin</fullName>
    </alternativeName>
    <alternativeName>
        <fullName>Major allergen Asp f 1</fullName>
    </alternativeName>
    <allergenName>Asp f 1</allergenName>
</protein>
<reference key="1">
    <citation type="journal article" date="1991" name="Mol. Microbiol.">
        <title>Secretion of a potential virulence factor, a fungal ribonucleotoxin, during human aspergillosis infections.</title>
        <authorList>
            <person name="Lamy B."/>
            <person name="Moutaouakil M."/>
            <person name="Latge J.P."/>
            <person name="Davies J."/>
        </authorList>
    </citation>
    <scope>NUCLEOTIDE SEQUENCE [GENOMIC DNA]</scope>
    <source>
        <strain>CBS 143.89</strain>
    </source>
</reference>
<reference key="2">
    <citation type="journal article" date="1992" name="J. Immunol.">
        <title>Selective expression of a major allergen and cytotoxin, Asp f I, in Aspergillus fumigatus. Implications for the immunopathogenesis of Aspergillus-related diseases.</title>
        <authorList>
            <person name="Arruda L.K."/>
            <person name="Mann B.J."/>
            <person name="Chapman M.D."/>
        </authorList>
    </citation>
    <scope>NUCLEOTIDE SEQUENCE [GENOMIC DNA]</scope>
</reference>
<reference key="3">
    <citation type="journal article" date="2005" name="Nature">
        <title>Genomic sequence of the pathogenic and allergenic filamentous fungus Aspergillus fumigatus.</title>
        <authorList>
            <person name="Nierman W.C."/>
            <person name="Pain A."/>
            <person name="Anderson M.J."/>
            <person name="Wortman J.R."/>
            <person name="Kim H.S."/>
            <person name="Arroyo J."/>
            <person name="Berriman M."/>
            <person name="Abe K."/>
            <person name="Archer D.B."/>
            <person name="Bermejo C."/>
            <person name="Bennett J.W."/>
            <person name="Bowyer P."/>
            <person name="Chen D."/>
            <person name="Collins M."/>
            <person name="Coulsen R."/>
            <person name="Davies R."/>
            <person name="Dyer P.S."/>
            <person name="Farman M.L."/>
            <person name="Fedorova N."/>
            <person name="Fedorova N.D."/>
            <person name="Feldblyum T.V."/>
            <person name="Fischer R."/>
            <person name="Fosker N."/>
            <person name="Fraser A."/>
            <person name="Garcia J.L."/>
            <person name="Garcia M.J."/>
            <person name="Goble A."/>
            <person name="Goldman G.H."/>
            <person name="Gomi K."/>
            <person name="Griffith-Jones S."/>
            <person name="Gwilliam R."/>
            <person name="Haas B.J."/>
            <person name="Haas H."/>
            <person name="Harris D.E."/>
            <person name="Horiuchi H."/>
            <person name="Huang J."/>
            <person name="Humphray S."/>
            <person name="Jimenez J."/>
            <person name="Keller N."/>
            <person name="Khouri H."/>
            <person name="Kitamoto K."/>
            <person name="Kobayashi T."/>
            <person name="Konzack S."/>
            <person name="Kulkarni R."/>
            <person name="Kumagai T."/>
            <person name="Lafton A."/>
            <person name="Latge J.-P."/>
            <person name="Li W."/>
            <person name="Lord A."/>
            <person name="Lu C."/>
            <person name="Majoros W.H."/>
            <person name="May G.S."/>
            <person name="Miller B.L."/>
            <person name="Mohamoud Y."/>
            <person name="Molina M."/>
            <person name="Monod M."/>
            <person name="Mouyna I."/>
            <person name="Mulligan S."/>
            <person name="Murphy L.D."/>
            <person name="O'Neil S."/>
            <person name="Paulsen I."/>
            <person name="Penalva M.A."/>
            <person name="Pertea M."/>
            <person name="Price C."/>
            <person name="Pritchard B.L."/>
            <person name="Quail M.A."/>
            <person name="Rabbinowitsch E."/>
            <person name="Rawlins N."/>
            <person name="Rajandream M.A."/>
            <person name="Reichard U."/>
            <person name="Renauld H."/>
            <person name="Robson G.D."/>
            <person name="Rodriguez de Cordoba S."/>
            <person name="Rodriguez-Pena J.M."/>
            <person name="Ronning C.M."/>
            <person name="Rutter S."/>
            <person name="Salzberg S.L."/>
            <person name="Sanchez M."/>
            <person name="Sanchez-Ferrero J.C."/>
            <person name="Saunders D."/>
            <person name="Seeger K."/>
            <person name="Squares R."/>
            <person name="Squares S."/>
            <person name="Takeuchi M."/>
            <person name="Tekaia F."/>
            <person name="Turner G."/>
            <person name="Vazquez de Aldana C.R."/>
            <person name="Weidman J."/>
            <person name="White O."/>
            <person name="Woodward J.R."/>
            <person name="Yu J.-H."/>
            <person name="Fraser C.M."/>
            <person name="Galagan J.E."/>
            <person name="Asai K."/>
            <person name="Machida M."/>
            <person name="Hall N."/>
            <person name="Barrell B.G."/>
            <person name="Denning D.W."/>
        </authorList>
    </citation>
    <scope>NUCLEOTIDE SEQUENCE [LARGE SCALE GENOMIC DNA]</scope>
    <source>
        <strain>ATCC MYA-4609 / CBS 101355 / FGSC A1100 / Af293</strain>
    </source>
</reference>
<reference key="4">
    <citation type="journal article" date="1992" name="J. Immunol.">
        <title>Cloning and expression of recombinant Aspergillus fumigatus allergen I/a (rAsp f I/a) with IgE binding and type I skin test activity.</title>
        <authorList>
            <person name="Moser M."/>
            <person name="Crameri R."/>
            <person name="Menz G."/>
            <person name="Schneider T."/>
            <person name="Dudler T."/>
            <person name="Virchow C."/>
            <person name="Gmachl M."/>
            <person name="Blaser K."/>
            <person name="Suter M."/>
        </authorList>
    </citation>
    <scope>NUCLEOTIDE SEQUENCE [MRNA] OF 28-176</scope>
</reference>
<reference key="5">
    <citation type="journal article" date="1990" name="J. Exp. Med.">
        <title>Aspergillus fumigatus allergen I, a major IgE-binding protein, is a member of the mitogillin family of cytotoxins.</title>
        <authorList>
            <person name="Arruda L.K."/>
            <person name="Platts-Mills T.A.E."/>
            <person name="Fox J.W."/>
            <person name="Chapman M.D."/>
        </authorList>
    </citation>
    <scope>PRELIMINARY PROTEIN SEQUENCE OF 28-176</scope>
    <source>
        <strain>5167</strain>
    </source>
</reference>
<reference key="6">
    <citation type="submission" date="1999-08" db="UniProtKB">
        <authorList>
            <person name="Sarma P.U."/>
            <person name="Bir N."/>
            <person name="Fairwell T."/>
        </authorList>
    </citation>
    <scope>PROTEIN SEQUENCE OF 28-48</scope>
    <source>
        <strain>AF-285 / Indian isolate</strain>
    </source>
</reference>